<sequence>YEYPQYYLVNPAAYAALGAYMFLLILVGFPINFLTLYVTIEHKKLRTPLNYILLNLAVANLFMVFGGFTTTMFTSIRGYFVLGHLGCNLEGFFATLSGEIALWSLVVLAIERWVVVCKPISNFRFGENHAIMGLAFTWTMAMACAAPPLVGWSRYIPEGMQCSCGIDYYTRAEGFNNESFVVYMFTCHFMTPLTIVFFCYGRLLCAVKEAAAAQQESETTQRAEREVTRMVVIMVIAFLICWCPYAGVAWFIFTHQGSEFGPVFMTIPAFFAKSSSIYNPMIYICLNKQFRHCMITTLCCGKKA</sequence>
<reference key="1">
    <citation type="journal article" date="1997" name="J. Neurosci.">
        <title>Parapinopsin, a novel catfish opsin localized to the parapineal organ, defines a new gene family.</title>
        <authorList>
            <person name="Blackshaw S."/>
            <person name="Snyder S.H."/>
        </authorList>
    </citation>
    <scope>NUCLEOTIDE SEQUENCE [MRNA]</scope>
</reference>
<feature type="chain" id="PRO_0000197678" description="Rhodopsin">
    <location>
        <begin position="1" status="less than"/>
        <end position="304" status="greater than"/>
    </location>
</feature>
<feature type="topological domain" description="Extracellular" evidence="7">
    <location>
        <begin position="1"/>
        <end position="13"/>
    </location>
</feature>
<feature type="transmembrane region" description="Helical; Name=1" evidence="1">
    <location>
        <begin position="14"/>
        <end position="38"/>
    </location>
</feature>
<feature type="topological domain" description="Cytoplasmic" evidence="7">
    <location>
        <begin position="39"/>
        <end position="50"/>
    </location>
</feature>
<feature type="transmembrane region" description="Helical; Name=2" evidence="1">
    <location>
        <begin position="51"/>
        <end position="73"/>
    </location>
</feature>
<feature type="topological domain" description="Extracellular" evidence="7">
    <location>
        <begin position="74"/>
        <end position="87"/>
    </location>
</feature>
<feature type="transmembrane region" description="Helical; Name=3" evidence="1">
    <location>
        <begin position="88"/>
        <end position="110"/>
    </location>
</feature>
<feature type="topological domain" description="Cytoplasmic" evidence="7">
    <location>
        <begin position="111"/>
        <end position="129"/>
    </location>
</feature>
<feature type="transmembrane region" description="Helical; Name=4" evidence="1">
    <location>
        <begin position="130"/>
        <end position="150"/>
    </location>
</feature>
<feature type="topological domain" description="Extracellular" evidence="7">
    <location>
        <begin position="151"/>
        <end position="179"/>
    </location>
</feature>
<feature type="transmembrane region" description="Helical; Name=5" evidence="1">
    <location>
        <begin position="180"/>
        <end position="201"/>
    </location>
</feature>
<feature type="topological domain" description="Cytoplasmic" evidence="7">
    <location>
        <begin position="202"/>
        <end position="229"/>
    </location>
</feature>
<feature type="transmembrane region" description="Helical; Name=6" evidence="1">
    <location>
        <begin position="230"/>
        <end position="251"/>
    </location>
</feature>
<feature type="topological domain" description="Extracellular" evidence="7">
    <location>
        <begin position="252"/>
        <end position="263"/>
    </location>
</feature>
<feature type="transmembrane region" description="Helical; Name=7" evidence="1">
    <location>
        <begin position="264"/>
        <end position="285"/>
    </location>
</feature>
<feature type="topological domain" description="Cytoplasmic" evidence="7">
    <location>
        <begin position="286"/>
        <end position="304"/>
    </location>
</feature>
<feature type="short sequence motif" description="'Ionic lock' involved in activated form stabilization" evidence="1">
    <location>
        <begin position="111"/>
        <end position="113"/>
    </location>
</feature>
<feature type="site" description="Plays an important role in the conformation switch to the active conformation" evidence="1">
    <location>
        <position position="90"/>
    </location>
</feature>
<feature type="modified residue" description="N6-(retinylidene)lysine" evidence="1">
    <location>
        <position position="273"/>
    </location>
</feature>
<feature type="lipid moiety-binding region" description="S-palmitoyl cysteine" evidence="1">
    <location>
        <position position="299"/>
    </location>
</feature>
<feature type="lipid moiety-binding region" description="S-palmitoyl cysteine" evidence="1">
    <location>
        <position position="300"/>
    </location>
</feature>
<feature type="glycosylation site" description="N-linked (GlcNAc...) asparagine" evidence="5">
    <location>
        <position position="177"/>
    </location>
</feature>
<feature type="disulfide bond" evidence="6">
    <location>
        <begin position="87"/>
        <end position="164"/>
    </location>
</feature>
<feature type="non-terminal residue">
    <location>
        <position position="1"/>
    </location>
</feature>
<feature type="non-terminal residue">
    <location>
        <position position="304"/>
    </location>
</feature>
<organism>
    <name type="scientific">Ictalurus punctatus</name>
    <name type="common">Channel catfish</name>
    <name type="synonym">Silurus punctatus</name>
    <dbReference type="NCBI Taxonomy" id="7998"/>
    <lineage>
        <taxon>Eukaryota</taxon>
        <taxon>Metazoa</taxon>
        <taxon>Chordata</taxon>
        <taxon>Craniata</taxon>
        <taxon>Vertebrata</taxon>
        <taxon>Euteleostomi</taxon>
        <taxon>Actinopterygii</taxon>
        <taxon>Neopterygii</taxon>
        <taxon>Teleostei</taxon>
        <taxon>Ostariophysi</taxon>
        <taxon>Siluriformes</taxon>
        <taxon>Ictaluridae</taxon>
        <taxon>Ictalurus</taxon>
    </lineage>
</organism>
<name>OPSD_ICTPU</name>
<evidence type="ECO:0000250" key="1">
    <source>
        <dbReference type="UniProtKB" id="P02699"/>
    </source>
</evidence>
<evidence type="ECO:0000250" key="2">
    <source>
        <dbReference type="UniProtKB" id="P08100"/>
    </source>
</evidence>
<evidence type="ECO:0000250" key="3">
    <source>
        <dbReference type="UniProtKB" id="P32309"/>
    </source>
</evidence>
<evidence type="ECO:0000250" key="4">
    <source>
        <dbReference type="UniProtKB" id="P35359"/>
    </source>
</evidence>
<evidence type="ECO:0000255" key="5"/>
<evidence type="ECO:0000255" key="6">
    <source>
        <dbReference type="PROSITE-ProRule" id="PRU00521"/>
    </source>
</evidence>
<evidence type="ECO:0000305" key="7"/>
<proteinExistence type="evidence at transcript level"/>
<accession>O42268</accession>
<protein>
    <recommendedName>
        <fullName>Rhodopsin</fullName>
    </recommendedName>
</protein>
<dbReference type="EMBL" id="AF028016">
    <property type="protein sequence ID" value="AAB84052.1"/>
    <property type="molecule type" value="mRNA"/>
</dbReference>
<dbReference type="SMR" id="O42268"/>
<dbReference type="STRING" id="7998.ENSIPUP00000036104"/>
<dbReference type="GlyCosmos" id="O42268">
    <property type="glycosylation" value="1 site, No reported glycans"/>
</dbReference>
<dbReference type="Proteomes" id="UP000221080">
    <property type="component" value="Unplaced"/>
</dbReference>
<dbReference type="GO" id="GO:0016020">
    <property type="term" value="C:membrane"/>
    <property type="evidence" value="ECO:0000250"/>
    <property type="project" value="UniProtKB"/>
</dbReference>
<dbReference type="GO" id="GO:0097381">
    <property type="term" value="C:photoreceptor disc membrane"/>
    <property type="evidence" value="ECO:0000250"/>
    <property type="project" value="UniProtKB"/>
</dbReference>
<dbReference type="GO" id="GO:0005886">
    <property type="term" value="C:plasma membrane"/>
    <property type="evidence" value="ECO:0000250"/>
    <property type="project" value="UniProtKB"/>
</dbReference>
<dbReference type="GO" id="GO:0005502">
    <property type="term" value="F:11-cis retinal binding"/>
    <property type="evidence" value="ECO:0000250"/>
    <property type="project" value="UniProtKB"/>
</dbReference>
<dbReference type="GO" id="GO:0008020">
    <property type="term" value="F:G protein-coupled photoreceptor activity"/>
    <property type="evidence" value="ECO:0000250"/>
    <property type="project" value="UniProtKB"/>
</dbReference>
<dbReference type="GO" id="GO:0016038">
    <property type="term" value="P:absorption of visible light"/>
    <property type="evidence" value="ECO:0000250"/>
    <property type="project" value="UniProtKB"/>
</dbReference>
<dbReference type="GO" id="GO:0016056">
    <property type="term" value="P:G protein-coupled opsin signaling pathway"/>
    <property type="evidence" value="ECO:0000250"/>
    <property type="project" value="UniProtKB"/>
</dbReference>
<dbReference type="GO" id="GO:0007601">
    <property type="term" value="P:visual perception"/>
    <property type="evidence" value="ECO:0007669"/>
    <property type="project" value="UniProtKB-KW"/>
</dbReference>
<dbReference type="CDD" id="cd15080">
    <property type="entry name" value="7tmA_MWS_opsin"/>
    <property type="match status" value="1"/>
</dbReference>
<dbReference type="FunFam" id="1.20.1070.10:FF:000357">
    <property type="entry name" value="Rhodopsin"/>
    <property type="match status" value="1"/>
</dbReference>
<dbReference type="Gene3D" id="1.20.1070.10">
    <property type="entry name" value="Rhodopsin 7-helix transmembrane proteins"/>
    <property type="match status" value="1"/>
</dbReference>
<dbReference type="InterPro" id="IPR050125">
    <property type="entry name" value="GPCR_opsins"/>
</dbReference>
<dbReference type="InterPro" id="IPR000276">
    <property type="entry name" value="GPCR_Rhodpsn"/>
</dbReference>
<dbReference type="InterPro" id="IPR017452">
    <property type="entry name" value="GPCR_Rhodpsn_7TM"/>
</dbReference>
<dbReference type="InterPro" id="IPR001760">
    <property type="entry name" value="Opsin"/>
</dbReference>
<dbReference type="InterPro" id="IPR027430">
    <property type="entry name" value="Retinal_BS"/>
</dbReference>
<dbReference type="InterPro" id="IPR000732">
    <property type="entry name" value="Rhodopsin"/>
</dbReference>
<dbReference type="PANTHER" id="PTHR24240">
    <property type="entry name" value="OPSIN"/>
    <property type="match status" value="1"/>
</dbReference>
<dbReference type="Pfam" id="PF00001">
    <property type="entry name" value="7tm_1"/>
    <property type="match status" value="1"/>
</dbReference>
<dbReference type="PRINTS" id="PR00237">
    <property type="entry name" value="GPCRRHODOPSN"/>
</dbReference>
<dbReference type="PRINTS" id="PR00238">
    <property type="entry name" value="OPSIN"/>
</dbReference>
<dbReference type="PRINTS" id="PR00579">
    <property type="entry name" value="RHODOPSIN"/>
</dbReference>
<dbReference type="SUPFAM" id="SSF81321">
    <property type="entry name" value="Family A G protein-coupled receptor-like"/>
    <property type="match status" value="1"/>
</dbReference>
<dbReference type="PROSITE" id="PS00237">
    <property type="entry name" value="G_PROTEIN_RECEP_F1_1"/>
    <property type="match status" value="1"/>
</dbReference>
<dbReference type="PROSITE" id="PS50262">
    <property type="entry name" value="G_PROTEIN_RECEP_F1_2"/>
    <property type="match status" value="1"/>
</dbReference>
<dbReference type="PROSITE" id="PS00238">
    <property type="entry name" value="OPSIN"/>
    <property type="match status" value="1"/>
</dbReference>
<comment type="function">
    <text evidence="1 2 3">Photoreceptor required for image-forming vision at low light intensity. While most salt water fish species use retinal as chromophore, most freshwater fish use 3-dehydroretinal, or a mixture of retinal and 3-dehydroretinal (By similarity). Light-induced isomerization of 11-cis to all-trans retinal triggers a conformational change that activates signaling via G-proteins. Subsequent receptor phosphorylation mediates displacement of the bound G-protein alpha subunit by arrestin and terminates signaling (By similarity).</text>
</comment>
<comment type="subcellular location">
    <subcellularLocation>
        <location evidence="2">Membrane</location>
        <topology evidence="2">Multi-pass membrane protein</topology>
    </subcellularLocation>
    <subcellularLocation>
        <location evidence="4">Cell projection</location>
        <location evidence="4">Cilium</location>
        <location evidence="4">Photoreceptor outer segment</location>
    </subcellularLocation>
    <text evidence="2">Synthesized in the inner segment (IS) of rod photoreceptor cells before vectorial transport to disk membranes in the rod outer segment (OS) photosensory cilia.</text>
</comment>
<comment type="PTM">
    <text evidence="1">Phosphorylated on some or all of the serine and threonine residues present in the C-terminal region.</text>
</comment>
<comment type="PTM">
    <text evidence="1">Contains one covalently linked retinal chromophore.</text>
</comment>
<comment type="similarity">
    <text evidence="6">Belongs to the G-protein coupled receptor 1 family. Opsin subfamily.</text>
</comment>
<gene>
    <name type="primary">rho</name>
</gene>
<keyword id="KW-0966">Cell projection</keyword>
<keyword id="KW-0157">Chromophore</keyword>
<keyword id="KW-1015">Disulfide bond</keyword>
<keyword id="KW-0297">G-protein coupled receptor</keyword>
<keyword id="KW-0325">Glycoprotein</keyword>
<keyword id="KW-0449">Lipoprotein</keyword>
<keyword id="KW-0472">Membrane</keyword>
<keyword id="KW-0564">Palmitate</keyword>
<keyword id="KW-0597">Phosphoprotein</keyword>
<keyword id="KW-0600">Photoreceptor protein</keyword>
<keyword id="KW-0675">Receptor</keyword>
<keyword id="KW-0681">Retinal protein</keyword>
<keyword id="KW-0716">Sensory transduction</keyword>
<keyword id="KW-0807">Transducer</keyword>
<keyword id="KW-0812">Transmembrane</keyword>
<keyword id="KW-1133">Transmembrane helix</keyword>
<keyword id="KW-0844">Vision</keyword>